<dbReference type="EC" id="5.1.1.3" evidence="1"/>
<dbReference type="EMBL" id="CP000246">
    <property type="protein sequence ID" value="ABG84145.1"/>
    <property type="molecule type" value="Genomic_DNA"/>
</dbReference>
<dbReference type="RefSeq" id="WP_003456846.1">
    <property type="nucleotide sequence ID" value="NC_008261.1"/>
</dbReference>
<dbReference type="SMR" id="Q0TM83"/>
<dbReference type="STRING" id="195103.CPF_2893"/>
<dbReference type="PaxDb" id="195103-CPF_2893"/>
<dbReference type="GeneID" id="93000828"/>
<dbReference type="KEGG" id="cpf:CPF_2893"/>
<dbReference type="eggNOG" id="COG0796">
    <property type="taxonomic scope" value="Bacteria"/>
</dbReference>
<dbReference type="HOGENOM" id="CLU_052344_1_0_9"/>
<dbReference type="UniPathway" id="UPA00219"/>
<dbReference type="Proteomes" id="UP000001823">
    <property type="component" value="Chromosome"/>
</dbReference>
<dbReference type="GO" id="GO:0008881">
    <property type="term" value="F:glutamate racemase activity"/>
    <property type="evidence" value="ECO:0007669"/>
    <property type="project" value="UniProtKB-UniRule"/>
</dbReference>
<dbReference type="GO" id="GO:0071555">
    <property type="term" value="P:cell wall organization"/>
    <property type="evidence" value="ECO:0007669"/>
    <property type="project" value="UniProtKB-KW"/>
</dbReference>
<dbReference type="GO" id="GO:0009252">
    <property type="term" value="P:peptidoglycan biosynthetic process"/>
    <property type="evidence" value="ECO:0007669"/>
    <property type="project" value="UniProtKB-UniRule"/>
</dbReference>
<dbReference type="GO" id="GO:0008360">
    <property type="term" value="P:regulation of cell shape"/>
    <property type="evidence" value="ECO:0007669"/>
    <property type="project" value="UniProtKB-KW"/>
</dbReference>
<dbReference type="FunFam" id="3.40.50.1860:FF:000001">
    <property type="entry name" value="Glutamate racemase"/>
    <property type="match status" value="1"/>
</dbReference>
<dbReference type="Gene3D" id="3.40.50.1860">
    <property type="match status" value="2"/>
</dbReference>
<dbReference type="HAMAP" id="MF_00258">
    <property type="entry name" value="Glu_racemase"/>
    <property type="match status" value="1"/>
</dbReference>
<dbReference type="InterPro" id="IPR015942">
    <property type="entry name" value="Asp/Glu/hydantoin_racemase"/>
</dbReference>
<dbReference type="InterPro" id="IPR001920">
    <property type="entry name" value="Asp/Glu_race"/>
</dbReference>
<dbReference type="InterPro" id="IPR018187">
    <property type="entry name" value="Asp/Glu_racemase_AS_1"/>
</dbReference>
<dbReference type="InterPro" id="IPR033134">
    <property type="entry name" value="Asp/Glu_racemase_AS_2"/>
</dbReference>
<dbReference type="InterPro" id="IPR004391">
    <property type="entry name" value="Glu_race"/>
</dbReference>
<dbReference type="NCBIfam" id="TIGR00067">
    <property type="entry name" value="glut_race"/>
    <property type="match status" value="1"/>
</dbReference>
<dbReference type="PANTHER" id="PTHR21198">
    <property type="entry name" value="GLUTAMATE RACEMASE"/>
    <property type="match status" value="1"/>
</dbReference>
<dbReference type="PANTHER" id="PTHR21198:SF3">
    <property type="entry name" value="GLUTAMATE RACEMASE"/>
    <property type="match status" value="1"/>
</dbReference>
<dbReference type="Pfam" id="PF01177">
    <property type="entry name" value="Asp_Glu_race"/>
    <property type="match status" value="1"/>
</dbReference>
<dbReference type="SUPFAM" id="SSF53681">
    <property type="entry name" value="Aspartate/glutamate racemase"/>
    <property type="match status" value="2"/>
</dbReference>
<dbReference type="PROSITE" id="PS00923">
    <property type="entry name" value="ASP_GLU_RACEMASE_1"/>
    <property type="match status" value="1"/>
</dbReference>
<dbReference type="PROSITE" id="PS00924">
    <property type="entry name" value="ASP_GLU_RACEMASE_2"/>
    <property type="match status" value="1"/>
</dbReference>
<comment type="function">
    <text evidence="1">Provides the (R)-glutamate required for cell wall biosynthesis.</text>
</comment>
<comment type="catalytic activity">
    <reaction evidence="1">
        <text>L-glutamate = D-glutamate</text>
        <dbReference type="Rhea" id="RHEA:12813"/>
        <dbReference type="ChEBI" id="CHEBI:29985"/>
        <dbReference type="ChEBI" id="CHEBI:29986"/>
        <dbReference type="EC" id="5.1.1.3"/>
    </reaction>
</comment>
<comment type="pathway">
    <text evidence="1">Cell wall biogenesis; peptidoglycan biosynthesis.</text>
</comment>
<comment type="similarity">
    <text evidence="1">Belongs to the aspartate/glutamate racemases family.</text>
</comment>
<gene>
    <name evidence="1" type="primary">murI</name>
    <name type="ordered locus">CPF_2893</name>
</gene>
<name>MURI_CLOP1</name>
<feature type="chain" id="PRO_1000047560" description="Glutamate racemase">
    <location>
        <begin position="1"/>
        <end position="260"/>
    </location>
</feature>
<feature type="active site" description="Proton donor/acceptor" evidence="1">
    <location>
        <position position="77"/>
    </location>
</feature>
<feature type="active site" description="Proton donor/acceptor" evidence="1">
    <location>
        <position position="188"/>
    </location>
</feature>
<feature type="binding site" evidence="1">
    <location>
        <begin position="14"/>
        <end position="15"/>
    </location>
    <ligand>
        <name>substrate</name>
    </ligand>
</feature>
<feature type="binding site" evidence="1">
    <location>
        <begin position="46"/>
        <end position="47"/>
    </location>
    <ligand>
        <name>substrate</name>
    </ligand>
</feature>
<feature type="binding site" evidence="1">
    <location>
        <begin position="78"/>
        <end position="79"/>
    </location>
    <ligand>
        <name>substrate</name>
    </ligand>
</feature>
<feature type="binding site" evidence="1">
    <location>
        <begin position="189"/>
        <end position="190"/>
    </location>
    <ligand>
        <name>substrate</name>
    </ligand>
</feature>
<proteinExistence type="inferred from homology"/>
<keyword id="KW-0133">Cell shape</keyword>
<keyword id="KW-0961">Cell wall biogenesis/degradation</keyword>
<keyword id="KW-0413">Isomerase</keyword>
<keyword id="KW-0573">Peptidoglycan synthesis</keyword>
<protein>
    <recommendedName>
        <fullName evidence="1">Glutamate racemase</fullName>
        <ecNumber evidence="1">5.1.1.3</ecNumber>
    </recommendedName>
</protein>
<organism>
    <name type="scientific">Clostridium perfringens (strain ATCC 13124 / DSM 756 / JCM 1290 / NCIMB 6125 / NCTC 8237 / Type A)</name>
    <dbReference type="NCBI Taxonomy" id="195103"/>
    <lineage>
        <taxon>Bacteria</taxon>
        <taxon>Bacillati</taxon>
        <taxon>Bacillota</taxon>
        <taxon>Clostridia</taxon>
        <taxon>Eubacteriales</taxon>
        <taxon>Clostridiaceae</taxon>
        <taxon>Clostridium</taxon>
    </lineage>
</organism>
<reference key="1">
    <citation type="journal article" date="2006" name="Genome Res.">
        <title>Skewed genomic variability in strains of the toxigenic bacterial pathogen, Clostridium perfringens.</title>
        <authorList>
            <person name="Myers G.S.A."/>
            <person name="Rasko D.A."/>
            <person name="Cheung J.K."/>
            <person name="Ravel J."/>
            <person name="Seshadri R."/>
            <person name="DeBoy R.T."/>
            <person name="Ren Q."/>
            <person name="Varga J."/>
            <person name="Awad M.M."/>
            <person name="Brinkac L.M."/>
            <person name="Daugherty S.C."/>
            <person name="Haft D.H."/>
            <person name="Dodson R.J."/>
            <person name="Madupu R."/>
            <person name="Nelson W.C."/>
            <person name="Rosovitz M.J."/>
            <person name="Sullivan S.A."/>
            <person name="Khouri H."/>
            <person name="Dimitrov G.I."/>
            <person name="Watkins K.L."/>
            <person name="Mulligan S."/>
            <person name="Benton J."/>
            <person name="Radune D."/>
            <person name="Fisher D.J."/>
            <person name="Atkins H.S."/>
            <person name="Hiscox T."/>
            <person name="Jost B.H."/>
            <person name="Billington S.J."/>
            <person name="Songer J.G."/>
            <person name="McClane B.A."/>
            <person name="Titball R.W."/>
            <person name="Rood J.I."/>
            <person name="Melville S.B."/>
            <person name="Paulsen I.T."/>
        </authorList>
    </citation>
    <scope>NUCLEOTIDE SEQUENCE [LARGE SCALE GENOMIC DNA]</scope>
    <source>
        <strain>ATCC 13124 / DSM 756 / JCM 1290 / NCIMB 6125 / NCTC 8237 / S 107 / Type A</strain>
    </source>
</reference>
<accession>Q0TM83</accession>
<evidence type="ECO:0000255" key="1">
    <source>
        <dbReference type="HAMAP-Rule" id="MF_00258"/>
    </source>
</evidence>
<sequence length="260" mass="29177">MQDDLKNAPIGFFDSGLGGLSVLRKALEMMPNENYIYYGDSKHAPYGEKTPQEIRSLSFNAIEFLIKKGAKAIVIACNTATSAAAHDLREYYKDIPIIGIEPALKPAIKLHETGSVIVMATKATLNQEKFKNLMDKYGEHREVIPLPCPGLVEFIEAGDLEGEDVKNFLREKLNPYMDREISSIVLGCTHYPFVKDVIQDIVGEKVDIIDGSSGTVRELKRRLEENNMESESKKKGNLDIFNSLEDKKILELSKKLIEIK</sequence>